<name>GCH3_SACS2</name>
<accession>Q980B6</accession>
<keyword id="KW-0342">GTP-binding</keyword>
<keyword id="KW-0378">Hydrolase</keyword>
<keyword id="KW-0547">Nucleotide-binding</keyword>
<keyword id="KW-1185">Reference proteome</keyword>
<proteinExistence type="inferred from homology"/>
<gene>
    <name evidence="1" type="primary">gch3</name>
    <name type="ordered locus">SSO0399</name>
</gene>
<comment type="function">
    <text evidence="1">Catalyzes the formation of 2-amino-5-formylamino-6-ribofuranosylamino-4(3H)-pyrimidinone ribonucleotide monophosphate and inorganic phosphate from GTP. Also has an independent pyrophosphate phosphohydrolase activity.</text>
</comment>
<comment type="catalytic activity">
    <reaction evidence="1">
        <text>GTP + 3 H2O = 2-amino-5-formylamino-6-(5-phospho-D-ribosylamino)pyrimidin-4(3H)-one + 2 phosphate + 2 H(+)</text>
        <dbReference type="Rhea" id="RHEA:22468"/>
        <dbReference type="ChEBI" id="CHEBI:15377"/>
        <dbReference type="ChEBI" id="CHEBI:15378"/>
        <dbReference type="ChEBI" id="CHEBI:37565"/>
        <dbReference type="ChEBI" id="CHEBI:43474"/>
        <dbReference type="ChEBI" id="CHEBI:57258"/>
        <dbReference type="EC" id="3.5.4.29"/>
    </reaction>
</comment>
<comment type="similarity">
    <text evidence="1">Belongs to the archaeal-type GTP cyclohydrolase family.</text>
</comment>
<feature type="chain" id="PRO_0000145758" description="GTP cyclohydrolase III">
    <location>
        <begin position="1"/>
        <end position="231"/>
    </location>
</feature>
<protein>
    <recommendedName>
        <fullName evidence="1">GTP cyclohydrolase III</fullName>
        <ecNumber evidence="1">3.5.4.29</ecNumber>
    </recommendedName>
</protein>
<sequence length="231" mass="27013">MKILAIKLLDYREWTERLGYDREWLIQKIQNKFMMKIHEIASQYNTFPLQLRFDNFLMIADGITTTQLAYMINDMQENLPVRIKSCLGYGKTPLEAQWNASICLNNQDDNEIKEYTDEKIAALHFDINFNTETLKYTSVYDSFIEITNIYVNLSRFLYKIGGILQYLGGDNYLGFISTESVNKVIEEFSDDNKIKVGIGIGKNARTAIRLATTSLEKIRNNREKTWHMEEE</sequence>
<reference key="1">
    <citation type="journal article" date="2001" name="Proc. Natl. Acad. Sci. U.S.A.">
        <title>The complete genome of the crenarchaeon Sulfolobus solfataricus P2.</title>
        <authorList>
            <person name="She Q."/>
            <person name="Singh R.K."/>
            <person name="Confalonieri F."/>
            <person name="Zivanovic Y."/>
            <person name="Allard G."/>
            <person name="Awayez M.J."/>
            <person name="Chan-Weiher C.C.-Y."/>
            <person name="Clausen I.G."/>
            <person name="Curtis B.A."/>
            <person name="De Moors A."/>
            <person name="Erauso G."/>
            <person name="Fletcher C."/>
            <person name="Gordon P.M.K."/>
            <person name="Heikamp-de Jong I."/>
            <person name="Jeffries A.C."/>
            <person name="Kozera C.J."/>
            <person name="Medina N."/>
            <person name="Peng X."/>
            <person name="Thi-Ngoc H.P."/>
            <person name="Redder P."/>
            <person name="Schenk M.E."/>
            <person name="Theriault C."/>
            <person name="Tolstrup N."/>
            <person name="Charlebois R.L."/>
            <person name="Doolittle W.F."/>
            <person name="Duguet M."/>
            <person name="Gaasterland T."/>
            <person name="Garrett R.A."/>
            <person name="Ragan M.A."/>
            <person name="Sensen C.W."/>
            <person name="Van der Oost J."/>
        </authorList>
    </citation>
    <scope>NUCLEOTIDE SEQUENCE [LARGE SCALE GENOMIC DNA]</scope>
    <source>
        <strain>ATCC 35092 / DSM 1617 / JCM 11322 / P2</strain>
    </source>
</reference>
<evidence type="ECO:0000255" key="1">
    <source>
        <dbReference type="HAMAP-Rule" id="MF_00608"/>
    </source>
</evidence>
<organism>
    <name type="scientific">Saccharolobus solfataricus (strain ATCC 35092 / DSM 1617 / JCM 11322 / P2)</name>
    <name type="common">Sulfolobus solfataricus</name>
    <dbReference type="NCBI Taxonomy" id="273057"/>
    <lineage>
        <taxon>Archaea</taxon>
        <taxon>Thermoproteota</taxon>
        <taxon>Thermoprotei</taxon>
        <taxon>Sulfolobales</taxon>
        <taxon>Sulfolobaceae</taxon>
        <taxon>Saccharolobus</taxon>
    </lineage>
</organism>
<dbReference type="EC" id="3.5.4.29" evidence="1"/>
<dbReference type="EMBL" id="AE006641">
    <property type="protein sequence ID" value="AAK40728.1"/>
    <property type="molecule type" value="Genomic_DNA"/>
</dbReference>
<dbReference type="PIR" id="A99184">
    <property type="entry name" value="A99184"/>
</dbReference>
<dbReference type="RefSeq" id="WP_009988791.1">
    <property type="nucleotide sequence ID" value="NC_002754.1"/>
</dbReference>
<dbReference type="SMR" id="Q980B6"/>
<dbReference type="FunCoup" id="Q980B6">
    <property type="interactions" value="9"/>
</dbReference>
<dbReference type="STRING" id="273057.SSO0399"/>
<dbReference type="PaxDb" id="273057-SSO0399"/>
<dbReference type="EnsemblBacteria" id="AAK40728">
    <property type="protein sequence ID" value="AAK40728"/>
    <property type="gene ID" value="SSO0399"/>
</dbReference>
<dbReference type="KEGG" id="sso:SSO0399"/>
<dbReference type="PATRIC" id="fig|273057.12.peg.395"/>
<dbReference type="eggNOG" id="arCOG04202">
    <property type="taxonomic scope" value="Archaea"/>
</dbReference>
<dbReference type="HOGENOM" id="CLU_080076_0_0_2"/>
<dbReference type="InParanoid" id="Q980B6"/>
<dbReference type="PhylomeDB" id="Q980B6"/>
<dbReference type="Proteomes" id="UP000001974">
    <property type="component" value="Chromosome"/>
</dbReference>
<dbReference type="GO" id="GO:0005525">
    <property type="term" value="F:GTP binding"/>
    <property type="evidence" value="ECO:0007669"/>
    <property type="project" value="UniProtKB-KW"/>
</dbReference>
<dbReference type="GO" id="GO:0043740">
    <property type="term" value="F:GTP cyclohydrolase IIa activity"/>
    <property type="evidence" value="ECO:0007669"/>
    <property type="project" value="UniProtKB-EC"/>
</dbReference>
<dbReference type="GO" id="GO:0009058">
    <property type="term" value="P:biosynthetic process"/>
    <property type="evidence" value="ECO:0007669"/>
    <property type="project" value="InterPro"/>
</dbReference>
<dbReference type="Gene3D" id="3.30.70.270">
    <property type="match status" value="1"/>
</dbReference>
<dbReference type="Gene3D" id="3.30.70.1230">
    <property type="entry name" value="Nucleotide cyclase"/>
    <property type="match status" value="1"/>
</dbReference>
<dbReference type="HAMAP" id="MF_00608">
    <property type="entry name" value="GTP_cyclohydro_3"/>
    <property type="match status" value="1"/>
</dbReference>
<dbReference type="InterPro" id="IPR007839">
    <property type="entry name" value="GTP_CycHdrlase_3"/>
</dbReference>
<dbReference type="InterPro" id="IPR029787">
    <property type="entry name" value="Nucleotide_cyclase"/>
</dbReference>
<dbReference type="InterPro" id="IPR043128">
    <property type="entry name" value="Rev_trsase/Diguanyl_cyclase"/>
</dbReference>
<dbReference type="PANTHER" id="PTHR42202">
    <property type="entry name" value="GTP CYCLOHYDROLASE III"/>
    <property type="match status" value="1"/>
</dbReference>
<dbReference type="PANTHER" id="PTHR42202:SF1">
    <property type="entry name" value="GTP CYCLOHYDROLASE III"/>
    <property type="match status" value="1"/>
</dbReference>
<dbReference type="Pfam" id="PF05165">
    <property type="entry name" value="GCH_III"/>
    <property type="match status" value="1"/>
</dbReference>
<dbReference type="PIRSF" id="PIRSF009265">
    <property type="entry name" value="GTP_cyclohydro_3"/>
    <property type="match status" value="1"/>
</dbReference>